<comment type="similarity">
    <text evidence="1">Belongs to the universal ribosomal protein uS2 family.</text>
</comment>
<protein>
    <recommendedName>
        <fullName evidence="1">Small ribosomal subunit protein uS2</fullName>
    </recommendedName>
    <alternativeName>
        <fullName evidence="3">30S ribosomal protein S2</fullName>
    </alternativeName>
</protein>
<gene>
    <name evidence="1" type="primary">rpsB</name>
    <name type="ordered locus">PPA1521</name>
</gene>
<evidence type="ECO:0000255" key="1">
    <source>
        <dbReference type="HAMAP-Rule" id="MF_00291"/>
    </source>
</evidence>
<evidence type="ECO:0000256" key="2">
    <source>
        <dbReference type="SAM" id="MobiDB-lite"/>
    </source>
</evidence>
<evidence type="ECO:0000305" key="3"/>
<evidence type="ECO:0007829" key="4">
    <source>
        <dbReference type="PDB" id="8CWO"/>
    </source>
</evidence>
<sequence length="283" mass="31536">MAVVTTRQLLESGVHFGHQTRRWNPKMKRFIFTERNGIYIIDLHQSLTYIDKAYAFVKETVAKGGQILFVGTKKQAQESIVEQATRVGMPYVNQRWLGGMLTNFQTISKRIARLKELEAMDFDKVSGSGLTKKELLMLSREKDKLEKDLGGIRDMPKVPQAVWVVDTKKEHLAIDEARKLKIPVVAILDTNCDPDEVDYAIPGNDDAIRSVSLLTRIIADAAAEGLMARSAGKSGEQPAEAEPMPDWERELLEGDGAKTEAKAEEPKAEAKKADEAPEAEKSN</sequence>
<proteinExistence type="evidence at protein level"/>
<dbReference type="EMBL" id="AE017283">
    <property type="protein sequence ID" value="AAT83268.1"/>
    <property type="molecule type" value="Genomic_DNA"/>
</dbReference>
<dbReference type="RefSeq" id="WP_002516927.1">
    <property type="nucleotide sequence ID" value="NZ_CP025935.1"/>
</dbReference>
<dbReference type="PDB" id="8CRX">
    <property type="method" value="EM"/>
    <property type="resolution" value="2.78 A"/>
    <property type="chains" value="B=1-283"/>
</dbReference>
<dbReference type="PDB" id="8CWO">
    <property type="method" value="EM"/>
    <property type="resolution" value="2.84 A"/>
    <property type="chains" value="B=1-283"/>
</dbReference>
<dbReference type="PDBsum" id="8CRX"/>
<dbReference type="PDBsum" id="8CWO"/>
<dbReference type="SMR" id="Q6A7J7"/>
<dbReference type="EnsemblBacteria" id="AAT83268">
    <property type="protein sequence ID" value="AAT83268"/>
    <property type="gene ID" value="PPA1521"/>
</dbReference>
<dbReference type="GeneID" id="92857504"/>
<dbReference type="KEGG" id="pac:PPA1521"/>
<dbReference type="eggNOG" id="COG0052">
    <property type="taxonomic scope" value="Bacteria"/>
</dbReference>
<dbReference type="HOGENOM" id="CLU_040318_2_3_11"/>
<dbReference type="Proteomes" id="UP000000603">
    <property type="component" value="Chromosome"/>
</dbReference>
<dbReference type="GO" id="GO:0022627">
    <property type="term" value="C:cytosolic small ribosomal subunit"/>
    <property type="evidence" value="ECO:0007669"/>
    <property type="project" value="TreeGrafter"/>
</dbReference>
<dbReference type="GO" id="GO:0003735">
    <property type="term" value="F:structural constituent of ribosome"/>
    <property type="evidence" value="ECO:0007669"/>
    <property type="project" value="InterPro"/>
</dbReference>
<dbReference type="GO" id="GO:0006412">
    <property type="term" value="P:translation"/>
    <property type="evidence" value="ECO:0007669"/>
    <property type="project" value="UniProtKB-UniRule"/>
</dbReference>
<dbReference type="CDD" id="cd01425">
    <property type="entry name" value="RPS2"/>
    <property type="match status" value="1"/>
</dbReference>
<dbReference type="FunFam" id="1.10.287.610:FF:000001">
    <property type="entry name" value="30S ribosomal protein S2"/>
    <property type="match status" value="1"/>
</dbReference>
<dbReference type="Gene3D" id="3.40.50.10490">
    <property type="entry name" value="Glucose-6-phosphate isomerase like protein, domain 1"/>
    <property type="match status" value="1"/>
</dbReference>
<dbReference type="Gene3D" id="1.10.287.610">
    <property type="entry name" value="Helix hairpin bin"/>
    <property type="match status" value="1"/>
</dbReference>
<dbReference type="HAMAP" id="MF_00291_B">
    <property type="entry name" value="Ribosomal_uS2_B"/>
    <property type="match status" value="1"/>
</dbReference>
<dbReference type="InterPro" id="IPR001865">
    <property type="entry name" value="Ribosomal_uS2"/>
</dbReference>
<dbReference type="InterPro" id="IPR005706">
    <property type="entry name" value="Ribosomal_uS2_bac/mit/plastid"/>
</dbReference>
<dbReference type="InterPro" id="IPR023591">
    <property type="entry name" value="Ribosomal_uS2_flav_dom_sf"/>
</dbReference>
<dbReference type="NCBIfam" id="TIGR01011">
    <property type="entry name" value="rpsB_bact"/>
    <property type="match status" value="1"/>
</dbReference>
<dbReference type="PANTHER" id="PTHR12534">
    <property type="entry name" value="30S RIBOSOMAL PROTEIN S2 PROKARYOTIC AND ORGANELLAR"/>
    <property type="match status" value="1"/>
</dbReference>
<dbReference type="PANTHER" id="PTHR12534:SF0">
    <property type="entry name" value="SMALL RIBOSOMAL SUBUNIT PROTEIN US2M"/>
    <property type="match status" value="1"/>
</dbReference>
<dbReference type="Pfam" id="PF00318">
    <property type="entry name" value="Ribosomal_S2"/>
    <property type="match status" value="1"/>
</dbReference>
<dbReference type="PRINTS" id="PR00395">
    <property type="entry name" value="RIBOSOMALS2"/>
</dbReference>
<dbReference type="SUPFAM" id="SSF52313">
    <property type="entry name" value="Ribosomal protein S2"/>
    <property type="match status" value="1"/>
</dbReference>
<keyword id="KW-0002">3D-structure</keyword>
<keyword id="KW-0687">Ribonucleoprotein</keyword>
<keyword id="KW-0689">Ribosomal protein</keyword>
<feature type="chain" id="PRO_0000134216" description="Small ribosomal subunit protein uS2">
    <location>
        <begin position="1"/>
        <end position="283"/>
    </location>
</feature>
<feature type="region of interest" description="Disordered" evidence="2">
    <location>
        <begin position="229"/>
        <end position="283"/>
    </location>
</feature>
<feature type="compositionally biased region" description="Basic and acidic residues" evidence="2">
    <location>
        <begin position="246"/>
        <end position="283"/>
    </location>
</feature>
<feature type="turn" evidence="4">
    <location>
        <begin position="3"/>
        <end position="6"/>
    </location>
</feature>
<feature type="helix" evidence="4">
    <location>
        <begin position="7"/>
        <end position="12"/>
    </location>
</feature>
<feature type="turn" evidence="4">
    <location>
        <begin position="13"/>
        <end position="15"/>
    </location>
</feature>
<feature type="strand" evidence="4">
    <location>
        <begin position="20"/>
        <end position="22"/>
    </location>
</feature>
<feature type="helix" evidence="4">
    <location>
        <begin position="25"/>
        <end position="27"/>
    </location>
</feature>
<feature type="strand" evidence="4">
    <location>
        <begin position="38"/>
        <end position="40"/>
    </location>
</feature>
<feature type="helix" evidence="4">
    <location>
        <begin position="45"/>
        <end position="62"/>
    </location>
</feature>
<feature type="strand" evidence="4">
    <location>
        <begin position="67"/>
        <end position="70"/>
    </location>
</feature>
<feature type="helix" evidence="4">
    <location>
        <begin position="74"/>
        <end position="87"/>
    </location>
</feature>
<feature type="strand" evidence="4">
    <location>
        <begin position="100"/>
        <end position="102"/>
    </location>
</feature>
<feature type="helix" evidence="4">
    <location>
        <begin position="104"/>
        <end position="126"/>
    </location>
</feature>
<feature type="turn" evidence="4">
    <location>
        <begin position="132"/>
        <end position="134"/>
    </location>
</feature>
<feature type="helix" evidence="4">
    <location>
        <begin position="135"/>
        <end position="148"/>
    </location>
</feature>
<feature type="helix" evidence="4">
    <location>
        <begin position="151"/>
        <end position="153"/>
    </location>
</feature>
<feature type="strand" evidence="4">
    <location>
        <begin position="156"/>
        <end position="158"/>
    </location>
</feature>
<feature type="strand" evidence="4">
    <location>
        <begin position="160"/>
        <end position="165"/>
    </location>
</feature>
<feature type="turn" evidence="4">
    <location>
        <begin position="167"/>
        <end position="170"/>
    </location>
</feature>
<feature type="helix" evidence="4">
    <location>
        <begin position="171"/>
        <end position="180"/>
    </location>
</feature>
<feature type="strand" evidence="4">
    <location>
        <begin position="184"/>
        <end position="188"/>
    </location>
</feature>
<feature type="strand" evidence="4">
    <location>
        <begin position="198"/>
        <end position="202"/>
    </location>
</feature>
<feature type="helix" evidence="4">
    <location>
        <begin position="208"/>
        <end position="232"/>
    </location>
</feature>
<organism>
    <name type="scientific">Cutibacterium acnes (strain DSM 16379 / KPA171202)</name>
    <name type="common">Propionibacterium acnes</name>
    <dbReference type="NCBI Taxonomy" id="267747"/>
    <lineage>
        <taxon>Bacteria</taxon>
        <taxon>Bacillati</taxon>
        <taxon>Actinomycetota</taxon>
        <taxon>Actinomycetes</taxon>
        <taxon>Propionibacteriales</taxon>
        <taxon>Propionibacteriaceae</taxon>
        <taxon>Cutibacterium</taxon>
    </lineage>
</organism>
<accession>Q6A7J7</accession>
<name>RS2_CUTAK</name>
<reference key="1">
    <citation type="journal article" date="2004" name="Science">
        <title>The complete genome sequence of Propionibacterium acnes, a commensal of human skin.</title>
        <authorList>
            <person name="Brueggemann H."/>
            <person name="Henne A."/>
            <person name="Hoster F."/>
            <person name="Liesegang H."/>
            <person name="Wiezer A."/>
            <person name="Strittmatter A."/>
            <person name="Hujer S."/>
            <person name="Duerre P."/>
            <person name="Gottschalk G."/>
        </authorList>
    </citation>
    <scope>NUCLEOTIDE SEQUENCE [LARGE SCALE GENOMIC DNA]</scope>
    <source>
        <strain>DSM 16379 / KPA171202</strain>
    </source>
</reference>